<name>PEPB_ECOL5</name>
<proteinExistence type="inferred from homology"/>
<dbReference type="EC" id="3.4.11.23" evidence="1"/>
<dbReference type="EMBL" id="CP000247">
    <property type="protein sequence ID" value="ABG70517.1"/>
    <property type="molecule type" value="Genomic_DNA"/>
</dbReference>
<dbReference type="RefSeq" id="WP_000133524.1">
    <property type="nucleotide sequence ID" value="NC_008253.1"/>
</dbReference>
<dbReference type="SMR" id="Q0TEW2"/>
<dbReference type="MEROPS" id="M17.004"/>
<dbReference type="KEGG" id="ecp:ECP_2528"/>
<dbReference type="HOGENOM" id="CLU_013734_7_1_6"/>
<dbReference type="Proteomes" id="UP000009182">
    <property type="component" value="Chromosome"/>
</dbReference>
<dbReference type="GO" id="GO:0005737">
    <property type="term" value="C:cytoplasm"/>
    <property type="evidence" value="ECO:0007669"/>
    <property type="project" value="UniProtKB-SubCell"/>
</dbReference>
<dbReference type="GO" id="GO:0030145">
    <property type="term" value="F:manganese ion binding"/>
    <property type="evidence" value="ECO:0007669"/>
    <property type="project" value="UniProtKB-UniRule"/>
</dbReference>
<dbReference type="GO" id="GO:0070006">
    <property type="term" value="F:metalloaminopeptidase activity"/>
    <property type="evidence" value="ECO:0007669"/>
    <property type="project" value="InterPro"/>
</dbReference>
<dbReference type="GO" id="GO:0006508">
    <property type="term" value="P:proteolysis"/>
    <property type="evidence" value="ECO:0007669"/>
    <property type="project" value="UniProtKB-UniRule"/>
</dbReference>
<dbReference type="CDD" id="cd00433">
    <property type="entry name" value="Peptidase_M17"/>
    <property type="match status" value="1"/>
</dbReference>
<dbReference type="FunFam" id="3.40.630.10:FF:000037">
    <property type="entry name" value="Peptidase B"/>
    <property type="match status" value="1"/>
</dbReference>
<dbReference type="Gene3D" id="3.40.630.10">
    <property type="entry name" value="Zn peptidases"/>
    <property type="match status" value="1"/>
</dbReference>
<dbReference type="HAMAP" id="MF_00504">
    <property type="entry name" value="Aminopeptidase_M17"/>
    <property type="match status" value="1"/>
</dbReference>
<dbReference type="InterPro" id="IPR011356">
    <property type="entry name" value="Leucine_aapep/pepB"/>
</dbReference>
<dbReference type="InterPro" id="IPR047620">
    <property type="entry name" value="M17_PepB-like_N"/>
</dbReference>
<dbReference type="InterPro" id="IPR008330">
    <property type="entry name" value="Pept_M17_PepB"/>
</dbReference>
<dbReference type="InterPro" id="IPR000819">
    <property type="entry name" value="Peptidase_M17_C"/>
</dbReference>
<dbReference type="NCBIfam" id="NF003450">
    <property type="entry name" value="PRK05015.1"/>
    <property type="match status" value="1"/>
</dbReference>
<dbReference type="PANTHER" id="PTHR11963">
    <property type="entry name" value="LEUCINE AMINOPEPTIDASE-RELATED"/>
    <property type="match status" value="1"/>
</dbReference>
<dbReference type="PANTHER" id="PTHR11963:SF20">
    <property type="entry name" value="PEPTIDASE B"/>
    <property type="match status" value="1"/>
</dbReference>
<dbReference type="Pfam" id="PF12404">
    <property type="entry name" value="DUF3663"/>
    <property type="match status" value="1"/>
</dbReference>
<dbReference type="Pfam" id="PF00883">
    <property type="entry name" value="Peptidase_M17"/>
    <property type="match status" value="1"/>
</dbReference>
<dbReference type="PIRSF" id="PIRSF036388">
    <property type="entry name" value="Ctsl_amnpptdse_B"/>
    <property type="match status" value="1"/>
</dbReference>
<dbReference type="PRINTS" id="PR00481">
    <property type="entry name" value="LAMNOPPTDASE"/>
</dbReference>
<dbReference type="SUPFAM" id="SSF53187">
    <property type="entry name" value="Zn-dependent exopeptidases"/>
    <property type="match status" value="1"/>
</dbReference>
<dbReference type="PROSITE" id="PS00631">
    <property type="entry name" value="CYTOSOL_AP"/>
    <property type="match status" value="1"/>
</dbReference>
<sequence>MTEAMKITLSPQPADARWGEKATYSINNDGITLHLNGADDLGLIQRAARKIDGLGIKHVQLSGEGWDADRCWAFWQGYKAPKGIRKVEWPDLDDAQRQELDNRLMIIDWVRDTINAPAEELGPSQLAQRAVDLISNVAGDRVTYRITKGEDLREQGYMGLHTVGRGSERSPVLLALDYNPTGDKEAPVYACLVGKGITFDSGGYSIKQTAFMDSMKSDMGGAATVTGALAFAITRGLNKRVKLFLCCADNLISGNAFKLGDIITYRNGKKVEVMNTDAEGRLVLADGLIDASAQKPELIIDAATLTGAAKTALGNDYHALFSFDDALAGRLLASAAQENEPFWRLPLAEFHRNQLPSNFAELNNTGSAAYPAGASTAAGFLSHFVENYQQGWLHIDCSATYRKAPVEQWSAGATGLGVRTIANLLTA</sequence>
<feature type="chain" id="PRO_0000258498" description="Peptidase B">
    <location>
        <begin position="1"/>
        <end position="427"/>
    </location>
</feature>
<feature type="active site" evidence="1">
    <location>
        <position position="207"/>
    </location>
</feature>
<feature type="active site" evidence="1">
    <location>
        <position position="281"/>
    </location>
</feature>
<feature type="binding site" evidence="1">
    <location>
        <position position="195"/>
    </location>
    <ligand>
        <name>Mn(2+)</name>
        <dbReference type="ChEBI" id="CHEBI:29035"/>
        <label>2</label>
    </ligand>
</feature>
<feature type="binding site" evidence="1">
    <location>
        <position position="200"/>
    </location>
    <ligand>
        <name>Mn(2+)</name>
        <dbReference type="ChEBI" id="CHEBI:29035"/>
        <label>1</label>
    </ligand>
</feature>
<feature type="binding site" evidence="1">
    <location>
        <position position="200"/>
    </location>
    <ligand>
        <name>Mn(2+)</name>
        <dbReference type="ChEBI" id="CHEBI:29035"/>
        <label>2</label>
    </ligand>
</feature>
<feature type="binding site" evidence="1">
    <location>
        <position position="218"/>
    </location>
    <ligand>
        <name>Mn(2+)</name>
        <dbReference type="ChEBI" id="CHEBI:29035"/>
        <label>2</label>
    </ligand>
</feature>
<feature type="binding site" evidence="1">
    <location>
        <position position="277"/>
    </location>
    <ligand>
        <name>Mn(2+)</name>
        <dbReference type="ChEBI" id="CHEBI:29035"/>
        <label>1</label>
    </ligand>
</feature>
<feature type="binding site" evidence="1">
    <location>
        <position position="279"/>
    </location>
    <ligand>
        <name>Mn(2+)</name>
        <dbReference type="ChEBI" id="CHEBI:29035"/>
        <label>1</label>
    </ligand>
</feature>
<feature type="binding site" evidence="1">
    <location>
        <position position="279"/>
    </location>
    <ligand>
        <name>Mn(2+)</name>
        <dbReference type="ChEBI" id="CHEBI:29035"/>
        <label>2</label>
    </ligand>
</feature>
<evidence type="ECO:0000255" key="1">
    <source>
        <dbReference type="HAMAP-Rule" id="MF_00504"/>
    </source>
</evidence>
<organism>
    <name type="scientific">Escherichia coli O6:K15:H31 (strain 536 / UPEC)</name>
    <dbReference type="NCBI Taxonomy" id="362663"/>
    <lineage>
        <taxon>Bacteria</taxon>
        <taxon>Pseudomonadati</taxon>
        <taxon>Pseudomonadota</taxon>
        <taxon>Gammaproteobacteria</taxon>
        <taxon>Enterobacterales</taxon>
        <taxon>Enterobacteriaceae</taxon>
        <taxon>Escherichia</taxon>
    </lineage>
</organism>
<protein>
    <recommendedName>
        <fullName evidence="1">Peptidase B</fullName>
        <ecNumber evidence="1">3.4.11.23</ecNumber>
    </recommendedName>
    <alternativeName>
        <fullName evidence="1">Aminopeptidase B</fullName>
    </alternativeName>
</protein>
<reference key="1">
    <citation type="journal article" date="2006" name="Mol. Microbiol.">
        <title>Role of pathogenicity island-associated integrases in the genome plasticity of uropathogenic Escherichia coli strain 536.</title>
        <authorList>
            <person name="Hochhut B."/>
            <person name="Wilde C."/>
            <person name="Balling G."/>
            <person name="Middendorf B."/>
            <person name="Dobrindt U."/>
            <person name="Brzuszkiewicz E."/>
            <person name="Gottschalk G."/>
            <person name="Carniel E."/>
            <person name="Hacker J."/>
        </authorList>
    </citation>
    <scope>NUCLEOTIDE SEQUENCE [LARGE SCALE GENOMIC DNA]</scope>
    <source>
        <strain>536 / UPEC</strain>
    </source>
</reference>
<accession>Q0TEW2</accession>
<comment type="function">
    <text evidence="1">Probably plays an important role in intracellular peptide degradation.</text>
</comment>
<comment type="catalytic activity">
    <reaction evidence="1">
        <text>Release of an N-terminal amino acid, Xaa, from a peptide or arylamide. Xaa is preferably Glu or Asp but may be other amino acids, including Leu, Met, His, Cys and Gln.</text>
        <dbReference type="EC" id="3.4.11.23"/>
    </reaction>
</comment>
<comment type="cofactor">
    <cofactor evidence="1">
        <name>Mn(2+)</name>
        <dbReference type="ChEBI" id="CHEBI:29035"/>
    </cofactor>
    <text evidence="1">Binds 2 manganese ions per subunit.</text>
</comment>
<comment type="subunit">
    <text evidence="1">Homohexamer.</text>
</comment>
<comment type="subcellular location">
    <subcellularLocation>
        <location evidence="1">Cytoplasm</location>
    </subcellularLocation>
</comment>
<comment type="similarity">
    <text evidence="1">Belongs to the peptidase M17 family.</text>
</comment>
<gene>
    <name evidence="1" type="primary">pepB</name>
    <name type="ordered locus">ECP_2528</name>
</gene>
<keyword id="KW-0031">Aminopeptidase</keyword>
<keyword id="KW-0963">Cytoplasm</keyword>
<keyword id="KW-0378">Hydrolase</keyword>
<keyword id="KW-0464">Manganese</keyword>
<keyword id="KW-0479">Metal-binding</keyword>
<keyword id="KW-0645">Protease</keyword>